<proteinExistence type="inferred from homology"/>
<evidence type="ECO:0000250" key="1"/>
<evidence type="ECO:0000250" key="2">
    <source>
        <dbReference type="UniProtKB" id="P00157"/>
    </source>
</evidence>
<evidence type="ECO:0000255" key="3">
    <source>
        <dbReference type="PROSITE-ProRule" id="PRU00967"/>
    </source>
</evidence>
<evidence type="ECO:0000255" key="4">
    <source>
        <dbReference type="PROSITE-ProRule" id="PRU00968"/>
    </source>
</evidence>
<geneLocation type="mitochondrion"/>
<reference key="1">
    <citation type="journal article" date="1999" name="Mol. Phylogenet. Evol.">
        <title>A molecular phylogeny of the pheasants and partridges suggests that these lineages are not monophyletic.</title>
        <authorList>
            <person name="Kimball R.T."/>
            <person name="Braun E.L."/>
            <person name="Zwartjes P.W."/>
            <person name="Crowe T.M."/>
            <person name="Ligon J.D."/>
        </authorList>
    </citation>
    <scope>NUCLEOTIDE SEQUENCE [GENOMIC DNA]</scope>
</reference>
<organism>
    <name type="scientific">Crossoptilon crossoptilon</name>
    <name type="common">White-eared pheasant</name>
    <name type="synonym">Phasianus crossoptilon</name>
    <dbReference type="NCBI Taxonomy" id="30408"/>
    <lineage>
        <taxon>Eukaryota</taxon>
        <taxon>Metazoa</taxon>
        <taxon>Chordata</taxon>
        <taxon>Craniata</taxon>
        <taxon>Vertebrata</taxon>
        <taxon>Euteleostomi</taxon>
        <taxon>Archelosauria</taxon>
        <taxon>Archosauria</taxon>
        <taxon>Dinosauria</taxon>
        <taxon>Saurischia</taxon>
        <taxon>Theropoda</taxon>
        <taxon>Coelurosauria</taxon>
        <taxon>Aves</taxon>
        <taxon>Neognathae</taxon>
        <taxon>Galloanserae</taxon>
        <taxon>Galliformes</taxon>
        <taxon>Phasianidae</taxon>
        <taxon>Phasianinae</taxon>
        <taxon>Crossoptilon</taxon>
    </lineage>
</organism>
<gene>
    <name type="primary">MT-CYB</name>
    <name type="synonym">COB</name>
    <name type="synonym">CYTB</name>
    <name type="synonym">MTCYB</name>
</gene>
<keyword id="KW-0249">Electron transport</keyword>
<keyword id="KW-0349">Heme</keyword>
<keyword id="KW-0408">Iron</keyword>
<keyword id="KW-0472">Membrane</keyword>
<keyword id="KW-0479">Metal-binding</keyword>
<keyword id="KW-0496">Mitochondrion</keyword>
<keyword id="KW-0999">Mitochondrion inner membrane</keyword>
<keyword id="KW-0679">Respiratory chain</keyword>
<keyword id="KW-0812">Transmembrane</keyword>
<keyword id="KW-1133">Transmembrane helix</keyword>
<keyword id="KW-0813">Transport</keyword>
<keyword id="KW-0830">Ubiquinone</keyword>
<protein>
    <recommendedName>
        <fullName>Cytochrome b</fullName>
    </recommendedName>
    <alternativeName>
        <fullName>Complex III subunit 3</fullName>
    </alternativeName>
    <alternativeName>
        <fullName>Complex III subunit III</fullName>
    </alternativeName>
    <alternativeName>
        <fullName>Cytochrome b-c1 complex subunit 3</fullName>
    </alternativeName>
    <alternativeName>
        <fullName>Ubiquinol-cytochrome-c reductase complex cytochrome b subunit</fullName>
    </alternativeName>
</protein>
<comment type="function">
    <text evidence="2">Component of the ubiquinol-cytochrome c reductase complex (complex III or cytochrome b-c1 complex) that is part of the mitochondrial respiratory chain. The b-c1 complex mediates electron transfer from ubiquinol to cytochrome c. Contributes to the generation of a proton gradient across the mitochondrial membrane that is then used for ATP synthesis.</text>
</comment>
<comment type="cofactor">
    <cofactor evidence="2">
        <name>heme b</name>
        <dbReference type="ChEBI" id="CHEBI:60344"/>
    </cofactor>
    <text evidence="2">Binds 2 heme b groups non-covalently.</text>
</comment>
<comment type="subunit">
    <text evidence="2">The cytochrome bc1 complex contains 11 subunits: 3 respiratory subunits (MT-CYB, CYC1 and UQCRFS1), 2 core proteins (UQCRC1 and UQCRC2) and 6 low-molecular weight proteins (UQCRH/QCR6, UQCRB/QCR7, UQCRQ/QCR8, UQCR10/QCR9, UQCR11/QCR10 and a cleavage product of UQCRFS1). This cytochrome bc1 complex then forms a dimer.</text>
</comment>
<comment type="subcellular location">
    <subcellularLocation>
        <location evidence="2">Mitochondrion inner membrane</location>
        <topology evidence="2">Multi-pass membrane protein</topology>
    </subcellularLocation>
</comment>
<comment type="miscellaneous">
    <text evidence="1">Heme 1 (or BL or b562) is low-potential and absorbs at about 562 nm, and heme 2 (or BH or b566) is high-potential and absorbs at about 566 nm.</text>
</comment>
<comment type="similarity">
    <text evidence="3 4">Belongs to the cytochrome b family.</text>
</comment>
<comment type="caution">
    <text evidence="2">The full-length protein contains only eight transmembrane helices, not nine as predicted by bioinformatics tools.</text>
</comment>
<feature type="chain" id="PRO_0000060825" description="Cytochrome b">
    <location>
        <begin position="1"/>
        <end position="380"/>
    </location>
</feature>
<feature type="transmembrane region" description="Helical" evidence="2">
    <location>
        <begin position="34"/>
        <end position="54"/>
    </location>
</feature>
<feature type="transmembrane region" description="Helical" evidence="2">
    <location>
        <begin position="78"/>
        <end position="99"/>
    </location>
</feature>
<feature type="transmembrane region" description="Helical" evidence="2">
    <location>
        <begin position="114"/>
        <end position="134"/>
    </location>
</feature>
<feature type="transmembrane region" description="Helical" evidence="2">
    <location>
        <begin position="179"/>
        <end position="199"/>
    </location>
</feature>
<feature type="transmembrane region" description="Helical" evidence="2">
    <location>
        <begin position="227"/>
        <end position="247"/>
    </location>
</feature>
<feature type="transmembrane region" description="Helical" evidence="2">
    <location>
        <begin position="289"/>
        <end position="309"/>
    </location>
</feature>
<feature type="transmembrane region" description="Helical" evidence="2">
    <location>
        <begin position="321"/>
        <end position="341"/>
    </location>
</feature>
<feature type="transmembrane region" description="Helical" evidence="2">
    <location>
        <begin position="348"/>
        <end position="368"/>
    </location>
</feature>
<feature type="binding site" description="axial binding residue" evidence="2">
    <location>
        <position position="84"/>
    </location>
    <ligand>
        <name>heme b</name>
        <dbReference type="ChEBI" id="CHEBI:60344"/>
        <label>b562</label>
    </ligand>
    <ligandPart>
        <name>Fe</name>
        <dbReference type="ChEBI" id="CHEBI:18248"/>
    </ligandPart>
</feature>
<feature type="binding site" description="axial binding residue" evidence="2">
    <location>
        <position position="98"/>
    </location>
    <ligand>
        <name>heme b</name>
        <dbReference type="ChEBI" id="CHEBI:60344"/>
        <label>b566</label>
    </ligand>
    <ligandPart>
        <name>Fe</name>
        <dbReference type="ChEBI" id="CHEBI:18248"/>
    </ligandPart>
</feature>
<feature type="binding site" description="axial binding residue" evidence="2">
    <location>
        <position position="183"/>
    </location>
    <ligand>
        <name>heme b</name>
        <dbReference type="ChEBI" id="CHEBI:60344"/>
        <label>b562</label>
    </ligand>
    <ligandPart>
        <name>Fe</name>
        <dbReference type="ChEBI" id="CHEBI:18248"/>
    </ligandPart>
</feature>
<feature type="binding site" description="axial binding residue" evidence="2">
    <location>
        <position position="197"/>
    </location>
    <ligand>
        <name>heme b</name>
        <dbReference type="ChEBI" id="CHEBI:60344"/>
        <label>b566</label>
    </ligand>
    <ligandPart>
        <name>Fe</name>
        <dbReference type="ChEBI" id="CHEBI:18248"/>
    </ligandPart>
</feature>
<feature type="binding site" evidence="2">
    <location>
        <position position="202"/>
    </location>
    <ligand>
        <name>a ubiquinone</name>
        <dbReference type="ChEBI" id="CHEBI:16389"/>
    </ligand>
</feature>
<name>CYB_CROCS</name>
<dbReference type="EMBL" id="AF028794">
    <property type="protein sequence ID" value="AAC62184.1"/>
    <property type="molecule type" value="Genomic_DNA"/>
</dbReference>
<dbReference type="SMR" id="O79652"/>
<dbReference type="GO" id="GO:0005743">
    <property type="term" value="C:mitochondrial inner membrane"/>
    <property type="evidence" value="ECO:0007669"/>
    <property type="project" value="UniProtKB-SubCell"/>
</dbReference>
<dbReference type="GO" id="GO:0045275">
    <property type="term" value="C:respiratory chain complex III"/>
    <property type="evidence" value="ECO:0007669"/>
    <property type="project" value="InterPro"/>
</dbReference>
<dbReference type="GO" id="GO:0046872">
    <property type="term" value="F:metal ion binding"/>
    <property type="evidence" value="ECO:0007669"/>
    <property type="project" value="UniProtKB-KW"/>
</dbReference>
<dbReference type="GO" id="GO:0008121">
    <property type="term" value="F:ubiquinol-cytochrome-c reductase activity"/>
    <property type="evidence" value="ECO:0007669"/>
    <property type="project" value="InterPro"/>
</dbReference>
<dbReference type="GO" id="GO:0006122">
    <property type="term" value="P:mitochondrial electron transport, ubiquinol to cytochrome c"/>
    <property type="evidence" value="ECO:0007669"/>
    <property type="project" value="TreeGrafter"/>
</dbReference>
<dbReference type="CDD" id="cd00290">
    <property type="entry name" value="cytochrome_b_C"/>
    <property type="match status" value="1"/>
</dbReference>
<dbReference type="CDD" id="cd00284">
    <property type="entry name" value="Cytochrome_b_N"/>
    <property type="match status" value="1"/>
</dbReference>
<dbReference type="FunFam" id="1.20.810.10:FF:000002">
    <property type="entry name" value="Cytochrome b"/>
    <property type="match status" value="1"/>
</dbReference>
<dbReference type="Gene3D" id="1.20.810.10">
    <property type="entry name" value="Cytochrome Bc1 Complex, Chain C"/>
    <property type="match status" value="1"/>
</dbReference>
<dbReference type="InterPro" id="IPR005798">
    <property type="entry name" value="Cyt_b/b6_C"/>
</dbReference>
<dbReference type="InterPro" id="IPR036150">
    <property type="entry name" value="Cyt_b/b6_C_sf"/>
</dbReference>
<dbReference type="InterPro" id="IPR005797">
    <property type="entry name" value="Cyt_b/b6_N"/>
</dbReference>
<dbReference type="InterPro" id="IPR027387">
    <property type="entry name" value="Cytb/b6-like_sf"/>
</dbReference>
<dbReference type="InterPro" id="IPR030689">
    <property type="entry name" value="Cytochrome_b"/>
</dbReference>
<dbReference type="InterPro" id="IPR048260">
    <property type="entry name" value="Cytochrome_b_C_euk/bac"/>
</dbReference>
<dbReference type="InterPro" id="IPR048259">
    <property type="entry name" value="Cytochrome_b_N_euk/bac"/>
</dbReference>
<dbReference type="InterPro" id="IPR016174">
    <property type="entry name" value="Di-haem_cyt_TM"/>
</dbReference>
<dbReference type="PANTHER" id="PTHR19271">
    <property type="entry name" value="CYTOCHROME B"/>
    <property type="match status" value="1"/>
</dbReference>
<dbReference type="PANTHER" id="PTHR19271:SF16">
    <property type="entry name" value="CYTOCHROME B"/>
    <property type="match status" value="1"/>
</dbReference>
<dbReference type="Pfam" id="PF00032">
    <property type="entry name" value="Cytochrom_B_C"/>
    <property type="match status" value="1"/>
</dbReference>
<dbReference type="Pfam" id="PF00033">
    <property type="entry name" value="Cytochrome_B"/>
    <property type="match status" value="1"/>
</dbReference>
<dbReference type="PIRSF" id="PIRSF038885">
    <property type="entry name" value="COB"/>
    <property type="match status" value="1"/>
</dbReference>
<dbReference type="SUPFAM" id="SSF81648">
    <property type="entry name" value="a domain/subunit of cytochrome bc1 complex (Ubiquinol-cytochrome c reductase)"/>
    <property type="match status" value="1"/>
</dbReference>
<dbReference type="SUPFAM" id="SSF81342">
    <property type="entry name" value="Transmembrane di-heme cytochromes"/>
    <property type="match status" value="1"/>
</dbReference>
<dbReference type="PROSITE" id="PS51003">
    <property type="entry name" value="CYTB_CTER"/>
    <property type="match status" value="1"/>
</dbReference>
<dbReference type="PROSITE" id="PS51002">
    <property type="entry name" value="CYTB_NTER"/>
    <property type="match status" value="1"/>
</dbReference>
<accession>O79652</accession>
<sequence>MAPNIRKSHPLLKMINNSLIDLPAPSNISAWWNFGSLLAVCLATQILTGLLLAMHYTADTSLAFSSVAHTCRNVQYGWLIRNLHANGASFFFICIFLHIGRGLYYGSYLYKETWNTGVILLLTLMATAFVGYVLPWGQMSFWGGTVITNLFSAIPYIGQTLVEWAWGGFSVDNPTLTRFFALHFLLPFVIAGITVTHLMFLHESGSNNPLGISSNSDKIPFHPYYSLKDILGLALMLTPFLTLALFSPNLLGDPENFTPANPLVTPPHIKPEWYFLFAYAILRSIPNKLGGVLALAASVLILLLIPFLHKSKQRTMTFRPLSQALFWLLVANLLILTWVGSQPVEHPFIIIGQMASFSYFTILLSLLPAVGTLENKMLNY</sequence>